<dbReference type="EMBL" id="BA000039">
    <property type="protein sequence ID" value="BAC07734.1"/>
    <property type="molecule type" value="Genomic_DNA"/>
</dbReference>
<dbReference type="RefSeq" id="NP_680972.1">
    <property type="nucleotide sequence ID" value="NC_004113.1"/>
</dbReference>
<dbReference type="RefSeq" id="WP_011056036.1">
    <property type="nucleotide sequence ID" value="NC_004113.1"/>
</dbReference>
<dbReference type="SMR" id="Q8DMD8"/>
<dbReference type="STRING" id="197221.gene:10746762"/>
<dbReference type="EnsemblBacteria" id="BAC07734">
    <property type="protein sequence ID" value="BAC07734"/>
    <property type="gene ID" value="BAC07734"/>
</dbReference>
<dbReference type="KEGG" id="tel:tll0181"/>
<dbReference type="PATRIC" id="fig|197221.4.peg.187"/>
<dbReference type="eggNOG" id="COG3705">
    <property type="taxonomic scope" value="Bacteria"/>
</dbReference>
<dbReference type="UniPathway" id="UPA00031">
    <property type="reaction ID" value="UER00006"/>
</dbReference>
<dbReference type="Proteomes" id="UP000000440">
    <property type="component" value="Chromosome"/>
</dbReference>
<dbReference type="GO" id="GO:0005737">
    <property type="term" value="C:cytoplasm"/>
    <property type="evidence" value="ECO:0007669"/>
    <property type="project" value="UniProtKB-SubCell"/>
</dbReference>
<dbReference type="GO" id="GO:0004821">
    <property type="term" value="F:histidine-tRNA ligase activity"/>
    <property type="evidence" value="ECO:0007669"/>
    <property type="project" value="TreeGrafter"/>
</dbReference>
<dbReference type="GO" id="GO:0006427">
    <property type="term" value="P:histidyl-tRNA aminoacylation"/>
    <property type="evidence" value="ECO:0007669"/>
    <property type="project" value="TreeGrafter"/>
</dbReference>
<dbReference type="GO" id="GO:0000105">
    <property type="term" value="P:L-histidine biosynthetic process"/>
    <property type="evidence" value="ECO:0007669"/>
    <property type="project" value="UniProtKB-UniRule"/>
</dbReference>
<dbReference type="CDD" id="cd00773">
    <property type="entry name" value="HisRS-like_core"/>
    <property type="match status" value="1"/>
</dbReference>
<dbReference type="Gene3D" id="3.30.930.10">
    <property type="entry name" value="Bira Bifunctional Protein, Domain 2"/>
    <property type="match status" value="1"/>
</dbReference>
<dbReference type="HAMAP" id="MF_00125">
    <property type="entry name" value="HisZ"/>
    <property type="match status" value="1"/>
</dbReference>
<dbReference type="InterPro" id="IPR006195">
    <property type="entry name" value="aa-tRNA-synth_II"/>
</dbReference>
<dbReference type="InterPro" id="IPR045864">
    <property type="entry name" value="aa-tRNA-synth_II/BPL/LPL"/>
</dbReference>
<dbReference type="InterPro" id="IPR041715">
    <property type="entry name" value="HisRS-like_core"/>
</dbReference>
<dbReference type="InterPro" id="IPR004516">
    <property type="entry name" value="HisRS/HisZ"/>
</dbReference>
<dbReference type="InterPro" id="IPR004517">
    <property type="entry name" value="HisZ"/>
</dbReference>
<dbReference type="NCBIfam" id="TIGR00443">
    <property type="entry name" value="hisZ_biosyn_reg"/>
    <property type="match status" value="1"/>
</dbReference>
<dbReference type="NCBIfam" id="NF008940">
    <property type="entry name" value="PRK12292.2-3"/>
    <property type="match status" value="1"/>
</dbReference>
<dbReference type="PANTHER" id="PTHR43707:SF1">
    <property type="entry name" value="HISTIDINE--TRNA LIGASE, MITOCHONDRIAL-RELATED"/>
    <property type="match status" value="1"/>
</dbReference>
<dbReference type="PANTHER" id="PTHR43707">
    <property type="entry name" value="HISTIDYL-TRNA SYNTHETASE"/>
    <property type="match status" value="1"/>
</dbReference>
<dbReference type="Pfam" id="PF13393">
    <property type="entry name" value="tRNA-synt_His"/>
    <property type="match status" value="1"/>
</dbReference>
<dbReference type="PIRSF" id="PIRSF001549">
    <property type="entry name" value="His-tRNA_synth"/>
    <property type="match status" value="1"/>
</dbReference>
<dbReference type="SUPFAM" id="SSF55681">
    <property type="entry name" value="Class II aaRS and biotin synthetases"/>
    <property type="match status" value="1"/>
</dbReference>
<dbReference type="PROSITE" id="PS50862">
    <property type="entry name" value="AA_TRNA_LIGASE_II"/>
    <property type="match status" value="1"/>
</dbReference>
<gene>
    <name evidence="1" type="primary">hisZ</name>
    <name type="ordered locus">tll0181</name>
</gene>
<accession>Q8DMD8</accession>
<proteinExistence type="inferred from homology"/>
<reference key="1">
    <citation type="journal article" date="2002" name="DNA Res.">
        <title>Complete genome structure of the thermophilic cyanobacterium Thermosynechococcus elongatus BP-1.</title>
        <authorList>
            <person name="Nakamura Y."/>
            <person name="Kaneko T."/>
            <person name="Sato S."/>
            <person name="Ikeuchi M."/>
            <person name="Katoh H."/>
            <person name="Sasamoto S."/>
            <person name="Watanabe A."/>
            <person name="Iriguchi M."/>
            <person name="Kawashima K."/>
            <person name="Kimura T."/>
            <person name="Kishida Y."/>
            <person name="Kiyokawa C."/>
            <person name="Kohara M."/>
            <person name="Matsumoto M."/>
            <person name="Matsuno A."/>
            <person name="Nakazaki N."/>
            <person name="Shimpo S."/>
            <person name="Sugimoto M."/>
            <person name="Takeuchi C."/>
            <person name="Yamada M."/>
            <person name="Tabata S."/>
        </authorList>
    </citation>
    <scope>NUCLEOTIDE SEQUENCE [LARGE SCALE GENOMIC DNA]</scope>
    <source>
        <strain>NIES-2133 / IAM M-273 / BP-1</strain>
    </source>
</reference>
<organism>
    <name type="scientific">Thermosynechococcus vestitus (strain NIES-2133 / IAM M-273 / BP-1)</name>
    <dbReference type="NCBI Taxonomy" id="197221"/>
    <lineage>
        <taxon>Bacteria</taxon>
        <taxon>Bacillati</taxon>
        <taxon>Cyanobacteriota</taxon>
        <taxon>Cyanophyceae</taxon>
        <taxon>Acaryochloridales</taxon>
        <taxon>Thermosynechococcaceae</taxon>
        <taxon>Thermosynechococcus</taxon>
    </lineage>
</organism>
<keyword id="KW-0028">Amino-acid biosynthesis</keyword>
<keyword id="KW-0963">Cytoplasm</keyword>
<keyword id="KW-0368">Histidine biosynthesis</keyword>
<keyword id="KW-1185">Reference proteome</keyword>
<name>HISZ_THEVB</name>
<evidence type="ECO:0000255" key="1">
    <source>
        <dbReference type="HAMAP-Rule" id="MF_00125"/>
    </source>
</evidence>
<sequence>MVYQPACGARDILPLDVARQRWLEQRLERVFQSWGYQEIITPTIETLATLTAGGTVHPETVIQVQGSGDEPLGLRPELTASIARAAVTRMAGMQLPQRLYYKTNVFRRTTGAELGNQQEFFQAGVELLGATGLAADAEILWLVQECLGVLAVGEAYLLVGDAHLTQQLLGTFPAELQKTVRQCLANLDRVSLQALPAPWRDRALALFDLRGTPEEVGERLAQWSDVAGVVDRFAQLQQLLALVAESLAITLDLSLVQSFDYYTGIIFEVLIPTETELRLVAQGGRYDQLLSIYHPDGATVPGIGFVFNVEALLQAVAIPPAALLAPRSQWLVVPRTANALAAALHHAQTLRLDGSTRVELALLELTPEQIRAYARDRQIPYIAWIESDAPPQIEALSDGATSLQIQRV</sequence>
<comment type="function">
    <text evidence="1">Required for the first step of histidine biosynthesis. May allow the feedback regulation of ATP phosphoribosyltransferase activity by histidine.</text>
</comment>
<comment type="pathway">
    <text evidence="1">Amino-acid biosynthesis; L-histidine biosynthesis; L-histidine from 5-phospho-alpha-D-ribose 1-diphosphate: step 1/9.</text>
</comment>
<comment type="subunit">
    <text evidence="1">Heteromultimer composed of HisG and HisZ subunits.</text>
</comment>
<comment type="subcellular location">
    <subcellularLocation>
        <location evidence="1">Cytoplasm</location>
    </subcellularLocation>
</comment>
<comment type="miscellaneous">
    <text>This function is generally fulfilled by the C-terminal part of HisG, which is missing in some bacteria such as this one.</text>
</comment>
<comment type="similarity">
    <text evidence="1">Belongs to the class-II aminoacyl-tRNA synthetase family. HisZ subfamily.</text>
</comment>
<feature type="chain" id="PRO_0000171068" description="ATP phosphoribosyltransferase regulatory subunit">
    <location>
        <begin position="1"/>
        <end position="408"/>
    </location>
</feature>
<protein>
    <recommendedName>
        <fullName evidence="1">ATP phosphoribosyltransferase regulatory subunit</fullName>
    </recommendedName>
</protein>